<gene>
    <name evidence="1" type="primary">obg</name>
    <name type="ordered locus">XC_3091</name>
</gene>
<feature type="chain" id="PRO_0000386395" description="GTPase Obg">
    <location>
        <begin position="1"/>
        <end position="350"/>
    </location>
</feature>
<feature type="domain" description="Obg" evidence="2">
    <location>
        <begin position="1"/>
        <end position="159"/>
    </location>
</feature>
<feature type="domain" description="OBG-type G" evidence="1">
    <location>
        <begin position="160"/>
        <end position="337"/>
    </location>
</feature>
<feature type="binding site" evidence="1">
    <location>
        <begin position="166"/>
        <end position="173"/>
    </location>
    <ligand>
        <name>GTP</name>
        <dbReference type="ChEBI" id="CHEBI:37565"/>
    </ligand>
</feature>
<feature type="binding site" evidence="1">
    <location>
        <position position="173"/>
    </location>
    <ligand>
        <name>Mg(2+)</name>
        <dbReference type="ChEBI" id="CHEBI:18420"/>
    </ligand>
</feature>
<feature type="binding site" evidence="1">
    <location>
        <begin position="191"/>
        <end position="195"/>
    </location>
    <ligand>
        <name>GTP</name>
        <dbReference type="ChEBI" id="CHEBI:37565"/>
    </ligand>
</feature>
<feature type="binding site" evidence="1">
    <location>
        <position position="193"/>
    </location>
    <ligand>
        <name>Mg(2+)</name>
        <dbReference type="ChEBI" id="CHEBI:18420"/>
    </ligand>
</feature>
<feature type="binding site" evidence="1">
    <location>
        <begin position="213"/>
        <end position="216"/>
    </location>
    <ligand>
        <name>GTP</name>
        <dbReference type="ChEBI" id="CHEBI:37565"/>
    </ligand>
</feature>
<feature type="binding site" evidence="1">
    <location>
        <begin position="287"/>
        <end position="290"/>
    </location>
    <ligand>
        <name>GTP</name>
        <dbReference type="ChEBI" id="CHEBI:37565"/>
    </ligand>
</feature>
<feature type="binding site" evidence="1">
    <location>
        <begin position="318"/>
        <end position="320"/>
    </location>
    <ligand>
        <name>GTP</name>
        <dbReference type="ChEBI" id="CHEBI:37565"/>
    </ligand>
</feature>
<protein>
    <recommendedName>
        <fullName evidence="1">GTPase Obg</fullName>
        <ecNumber evidence="1">3.6.5.-</ecNumber>
    </recommendedName>
    <alternativeName>
        <fullName evidence="1">GTP-binding protein Obg</fullName>
    </alternativeName>
</protein>
<sequence length="350" mass="37698">MKLVDEAEILVTAGNGGNGCVGFRREKFIPLGGPDGGDGGNGGSVWIVADENVNTLVDFRHERAFKAQRGENGMGRQAYGKGGEDRVIVVPVGTVVMNVQTDEIIGDMTQHGDRLLVAKGGKGGLGNMHFKSSVNRAPRQSTTGEEGEERLLKLELKLLADVGLLGFPNAGKSTLIRAVSAATPKVADYPFTTLYPNLGVVSVEAYRSFVIADVPGLIEGAADGAGLGTQFLRHLQRTRLLLHLVDISPMDGGVDGVSPVDQVRTIERELERHDPALLEKPRWLVLNKADLMFPEEAQAAAEAIVAELGWTAPWYLVSALGRDGTFPIMKDVMAFFDRQREDELEARNAG</sequence>
<dbReference type="EC" id="3.6.5.-" evidence="1"/>
<dbReference type="EMBL" id="CP000050">
    <property type="protein sequence ID" value="AAY50137.1"/>
    <property type="molecule type" value="Genomic_DNA"/>
</dbReference>
<dbReference type="SMR" id="Q4US36"/>
<dbReference type="KEGG" id="xcb:XC_3091"/>
<dbReference type="HOGENOM" id="CLU_011747_2_0_6"/>
<dbReference type="Proteomes" id="UP000000420">
    <property type="component" value="Chromosome"/>
</dbReference>
<dbReference type="GO" id="GO:0005737">
    <property type="term" value="C:cytoplasm"/>
    <property type="evidence" value="ECO:0007669"/>
    <property type="project" value="UniProtKB-SubCell"/>
</dbReference>
<dbReference type="GO" id="GO:0005525">
    <property type="term" value="F:GTP binding"/>
    <property type="evidence" value="ECO:0007669"/>
    <property type="project" value="UniProtKB-UniRule"/>
</dbReference>
<dbReference type="GO" id="GO:0003924">
    <property type="term" value="F:GTPase activity"/>
    <property type="evidence" value="ECO:0007669"/>
    <property type="project" value="UniProtKB-UniRule"/>
</dbReference>
<dbReference type="GO" id="GO:0000287">
    <property type="term" value="F:magnesium ion binding"/>
    <property type="evidence" value="ECO:0007669"/>
    <property type="project" value="InterPro"/>
</dbReference>
<dbReference type="GO" id="GO:0042254">
    <property type="term" value="P:ribosome biogenesis"/>
    <property type="evidence" value="ECO:0007669"/>
    <property type="project" value="UniProtKB-UniRule"/>
</dbReference>
<dbReference type="CDD" id="cd01898">
    <property type="entry name" value="Obg"/>
    <property type="match status" value="1"/>
</dbReference>
<dbReference type="FunFam" id="2.70.210.12:FF:000001">
    <property type="entry name" value="GTPase Obg"/>
    <property type="match status" value="1"/>
</dbReference>
<dbReference type="Gene3D" id="2.70.210.12">
    <property type="entry name" value="GTP1/OBG domain"/>
    <property type="match status" value="1"/>
</dbReference>
<dbReference type="Gene3D" id="3.40.50.300">
    <property type="entry name" value="P-loop containing nucleotide triphosphate hydrolases"/>
    <property type="match status" value="1"/>
</dbReference>
<dbReference type="HAMAP" id="MF_01454">
    <property type="entry name" value="GTPase_Obg"/>
    <property type="match status" value="1"/>
</dbReference>
<dbReference type="InterPro" id="IPR031167">
    <property type="entry name" value="G_OBG"/>
</dbReference>
<dbReference type="InterPro" id="IPR006073">
    <property type="entry name" value="GTP-bd"/>
</dbReference>
<dbReference type="InterPro" id="IPR014100">
    <property type="entry name" value="GTP-bd_Obg/CgtA"/>
</dbReference>
<dbReference type="InterPro" id="IPR006074">
    <property type="entry name" value="GTP1-OBG_CS"/>
</dbReference>
<dbReference type="InterPro" id="IPR006169">
    <property type="entry name" value="GTP1_OBG_dom"/>
</dbReference>
<dbReference type="InterPro" id="IPR036726">
    <property type="entry name" value="GTP1_OBG_dom_sf"/>
</dbReference>
<dbReference type="InterPro" id="IPR045086">
    <property type="entry name" value="OBG_GTPase"/>
</dbReference>
<dbReference type="InterPro" id="IPR027417">
    <property type="entry name" value="P-loop_NTPase"/>
</dbReference>
<dbReference type="NCBIfam" id="TIGR02729">
    <property type="entry name" value="Obg_CgtA"/>
    <property type="match status" value="1"/>
</dbReference>
<dbReference type="NCBIfam" id="NF008955">
    <property type="entry name" value="PRK12297.1"/>
    <property type="match status" value="1"/>
</dbReference>
<dbReference type="NCBIfam" id="NF008956">
    <property type="entry name" value="PRK12299.1"/>
    <property type="match status" value="1"/>
</dbReference>
<dbReference type="PANTHER" id="PTHR11702">
    <property type="entry name" value="DEVELOPMENTALLY REGULATED GTP-BINDING PROTEIN-RELATED"/>
    <property type="match status" value="1"/>
</dbReference>
<dbReference type="PANTHER" id="PTHR11702:SF31">
    <property type="entry name" value="MITOCHONDRIAL RIBOSOME-ASSOCIATED GTPASE 2"/>
    <property type="match status" value="1"/>
</dbReference>
<dbReference type="Pfam" id="PF01018">
    <property type="entry name" value="GTP1_OBG"/>
    <property type="match status" value="1"/>
</dbReference>
<dbReference type="Pfam" id="PF01926">
    <property type="entry name" value="MMR_HSR1"/>
    <property type="match status" value="1"/>
</dbReference>
<dbReference type="PIRSF" id="PIRSF002401">
    <property type="entry name" value="GTP_bd_Obg/CgtA"/>
    <property type="match status" value="1"/>
</dbReference>
<dbReference type="PRINTS" id="PR00326">
    <property type="entry name" value="GTP1OBG"/>
</dbReference>
<dbReference type="SUPFAM" id="SSF82051">
    <property type="entry name" value="Obg GTP-binding protein N-terminal domain"/>
    <property type="match status" value="1"/>
</dbReference>
<dbReference type="SUPFAM" id="SSF52540">
    <property type="entry name" value="P-loop containing nucleoside triphosphate hydrolases"/>
    <property type="match status" value="1"/>
</dbReference>
<dbReference type="PROSITE" id="PS51710">
    <property type="entry name" value="G_OBG"/>
    <property type="match status" value="1"/>
</dbReference>
<dbReference type="PROSITE" id="PS00905">
    <property type="entry name" value="GTP1_OBG"/>
    <property type="match status" value="1"/>
</dbReference>
<dbReference type="PROSITE" id="PS51883">
    <property type="entry name" value="OBG"/>
    <property type="match status" value="1"/>
</dbReference>
<organism>
    <name type="scientific">Xanthomonas campestris pv. campestris (strain 8004)</name>
    <dbReference type="NCBI Taxonomy" id="314565"/>
    <lineage>
        <taxon>Bacteria</taxon>
        <taxon>Pseudomonadati</taxon>
        <taxon>Pseudomonadota</taxon>
        <taxon>Gammaproteobacteria</taxon>
        <taxon>Lysobacterales</taxon>
        <taxon>Lysobacteraceae</taxon>
        <taxon>Xanthomonas</taxon>
    </lineage>
</organism>
<evidence type="ECO:0000255" key="1">
    <source>
        <dbReference type="HAMAP-Rule" id="MF_01454"/>
    </source>
</evidence>
<evidence type="ECO:0000255" key="2">
    <source>
        <dbReference type="PROSITE-ProRule" id="PRU01231"/>
    </source>
</evidence>
<proteinExistence type="inferred from homology"/>
<comment type="function">
    <text evidence="1">An essential GTPase which binds GTP, GDP and possibly (p)ppGpp with moderate affinity, with high nucleotide exchange rates and a fairly low GTP hydrolysis rate. Plays a role in control of the cell cycle, stress response, ribosome biogenesis and in those bacteria that undergo differentiation, in morphogenesis control.</text>
</comment>
<comment type="cofactor">
    <cofactor evidence="1">
        <name>Mg(2+)</name>
        <dbReference type="ChEBI" id="CHEBI:18420"/>
    </cofactor>
</comment>
<comment type="subunit">
    <text evidence="1">Monomer.</text>
</comment>
<comment type="subcellular location">
    <subcellularLocation>
        <location evidence="1">Cytoplasm</location>
    </subcellularLocation>
</comment>
<comment type="similarity">
    <text evidence="1">Belongs to the TRAFAC class OBG-HflX-like GTPase superfamily. OBG GTPase family.</text>
</comment>
<reference key="1">
    <citation type="journal article" date="2005" name="Genome Res.">
        <title>Comparative and functional genomic analyses of the pathogenicity of phytopathogen Xanthomonas campestris pv. campestris.</title>
        <authorList>
            <person name="Qian W."/>
            <person name="Jia Y."/>
            <person name="Ren S.-X."/>
            <person name="He Y.-Q."/>
            <person name="Feng J.-X."/>
            <person name="Lu L.-F."/>
            <person name="Sun Q."/>
            <person name="Ying G."/>
            <person name="Tang D.-J."/>
            <person name="Tang H."/>
            <person name="Wu W."/>
            <person name="Hao P."/>
            <person name="Wang L."/>
            <person name="Jiang B.-L."/>
            <person name="Zeng S."/>
            <person name="Gu W.-Y."/>
            <person name="Lu G."/>
            <person name="Rong L."/>
            <person name="Tian Y."/>
            <person name="Yao Z."/>
            <person name="Fu G."/>
            <person name="Chen B."/>
            <person name="Fang R."/>
            <person name="Qiang B."/>
            <person name="Chen Z."/>
            <person name="Zhao G.-P."/>
            <person name="Tang J.-L."/>
            <person name="He C."/>
        </authorList>
    </citation>
    <scope>NUCLEOTIDE SEQUENCE [LARGE SCALE GENOMIC DNA]</scope>
    <source>
        <strain>8004</strain>
    </source>
</reference>
<accession>Q4US36</accession>
<keyword id="KW-0963">Cytoplasm</keyword>
<keyword id="KW-0342">GTP-binding</keyword>
<keyword id="KW-0378">Hydrolase</keyword>
<keyword id="KW-0460">Magnesium</keyword>
<keyword id="KW-0479">Metal-binding</keyword>
<keyword id="KW-0547">Nucleotide-binding</keyword>
<name>OBG_XANC8</name>